<organism>
    <name type="scientific">Homo sapiens</name>
    <name type="common">Human</name>
    <dbReference type="NCBI Taxonomy" id="9606"/>
    <lineage>
        <taxon>Eukaryota</taxon>
        <taxon>Metazoa</taxon>
        <taxon>Chordata</taxon>
        <taxon>Craniata</taxon>
        <taxon>Vertebrata</taxon>
        <taxon>Euteleostomi</taxon>
        <taxon>Mammalia</taxon>
        <taxon>Eutheria</taxon>
        <taxon>Euarchontoglires</taxon>
        <taxon>Primates</taxon>
        <taxon>Haplorrhini</taxon>
        <taxon>Catarrhini</taxon>
        <taxon>Hominidae</taxon>
        <taxon>Homo</taxon>
    </lineage>
</organism>
<feature type="signal peptide">
    <location>
        <begin position="1"/>
        <end position="20"/>
    </location>
</feature>
<feature type="chain" id="PRO_0000006010" description="Complement receptor type 2">
    <location>
        <begin position="21"/>
        <end position="1033"/>
    </location>
</feature>
<feature type="topological domain" description="Extracellular" evidence="1">
    <location>
        <begin position="21"/>
        <end position="971"/>
    </location>
</feature>
<feature type="transmembrane region" description="Helical" evidence="1">
    <location>
        <begin position="972"/>
        <end position="999"/>
    </location>
</feature>
<feature type="topological domain" description="Cytoplasmic" evidence="1">
    <location>
        <begin position="1000"/>
        <end position="1033"/>
    </location>
</feature>
<feature type="domain" description="Sushi 1" evidence="2">
    <location>
        <begin position="21"/>
        <end position="84"/>
    </location>
</feature>
<feature type="domain" description="Sushi 2" evidence="2">
    <location>
        <begin position="89"/>
        <end position="148"/>
    </location>
</feature>
<feature type="domain" description="Sushi 3" evidence="2">
    <location>
        <begin position="152"/>
        <end position="212"/>
    </location>
</feature>
<feature type="domain" description="Sushi 4" evidence="2">
    <location>
        <begin position="213"/>
        <end position="273"/>
    </location>
</feature>
<feature type="domain" description="Sushi 5" evidence="2">
    <location>
        <begin position="274"/>
        <end position="344"/>
    </location>
</feature>
<feature type="domain" description="Sushi 6" evidence="2">
    <location>
        <begin position="349"/>
        <end position="408"/>
    </location>
</feature>
<feature type="domain" description="Sushi 7" evidence="2">
    <location>
        <begin position="409"/>
        <end position="468"/>
    </location>
</feature>
<feature type="domain" description="Sushi 8" evidence="2">
    <location>
        <begin position="469"/>
        <end position="524"/>
    </location>
</feature>
<feature type="domain" description="Sushi 9" evidence="2">
    <location>
        <begin position="525"/>
        <end position="595"/>
    </location>
</feature>
<feature type="domain" description="Sushi 10" evidence="2">
    <location>
        <begin position="600"/>
        <end position="659"/>
    </location>
</feature>
<feature type="domain" description="Sushi 11" evidence="2">
    <location>
        <begin position="660"/>
        <end position="716"/>
    </location>
</feature>
<feature type="domain" description="Sushi 12" evidence="2">
    <location>
        <begin position="717"/>
        <end position="781"/>
    </location>
</feature>
<feature type="domain" description="Sushi 13" evidence="2">
    <location>
        <begin position="786"/>
        <end position="845"/>
    </location>
</feature>
<feature type="domain" description="Sushi 14" evidence="2">
    <location>
        <begin position="849"/>
        <end position="909"/>
    </location>
</feature>
<feature type="domain" description="Sushi 15" evidence="2">
    <location>
        <begin position="910"/>
        <end position="970"/>
    </location>
</feature>
<feature type="glycosylation site" description="N-linked (GlcNAc...) asparagine" evidence="4 31">
    <location>
        <position position="121"/>
    </location>
</feature>
<feature type="glycosylation site" description="N-linked (GlcNAc...) asparagine" evidence="4 31">
    <location>
        <position position="127"/>
    </location>
</feature>
<feature type="glycosylation site" description="N-linked (GlcNAc...) asparagine" evidence="1">
    <location>
        <position position="294"/>
    </location>
</feature>
<feature type="glycosylation site" description="N-linked (GlcNAc...) asparagine" evidence="1">
    <location>
        <position position="372"/>
    </location>
</feature>
<feature type="glycosylation site" description="N-linked (GlcNAc...) asparagine" evidence="1">
    <location>
        <position position="492"/>
    </location>
</feature>
<feature type="glycosylation site" description="N-linked (GlcNAc...) asparagine" evidence="14">
    <location>
        <position position="623"/>
    </location>
</feature>
<feature type="glycosylation site" description="N-linked (GlcNAc...) asparagine" evidence="1">
    <location>
        <position position="682"/>
    </location>
</feature>
<feature type="glycosylation site" description="N-linked (GlcNAc...) asparagine" evidence="1">
    <location>
        <position position="800"/>
    </location>
</feature>
<feature type="glycosylation site" description="N-linked (GlcNAc...) asparagine" evidence="1">
    <location>
        <position position="823"/>
    </location>
</feature>
<feature type="glycosylation site" description="N-linked (GlcNAc...) asparagine" evidence="1">
    <location>
        <position position="861"/>
    </location>
</feature>
<feature type="glycosylation site" description="N-linked (GlcNAc...) asparagine" evidence="1">
    <location>
        <position position="911"/>
    </location>
</feature>
<feature type="disulfide bond" evidence="3 4 15 30 31 32">
    <location>
        <begin position="23"/>
        <end position="65"/>
    </location>
</feature>
<feature type="disulfide bond" evidence="3 4 15 30 31 32">
    <location>
        <begin position="51"/>
        <end position="82"/>
    </location>
</feature>
<feature type="disulfide bond" evidence="3 4 15 30 31 32">
    <location>
        <begin position="91"/>
        <end position="132"/>
    </location>
</feature>
<feature type="disulfide bond" evidence="3 4 15 30 31 32">
    <location>
        <begin position="118"/>
        <end position="146"/>
    </location>
</feature>
<feature type="disulfide bond" evidence="2">
    <location>
        <begin position="154"/>
        <end position="197"/>
    </location>
</feature>
<feature type="disulfide bond" evidence="2">
    <location>
        <begin position="183"/>
        <end position="210"/>
    </location>
</feature>
<feature type="disulfide bond" evidence="2">
    <location>
        <begin position="215"/>
        <end position="256"/>
    </location>
</feature>
<feature type="disulfide bond" evidence="2">
    <location>
        <begin position="242"/>
        <end position="271"/>
    </location>
</feature>
<feature type="disulfide bond" evidence="2">
    <location>
        <begin position="276"/>
        <end position="325"/>
    </location>
</feature>
<feature type="disulfide bond" evidence="2">
    <location>
        <begin position="305"/>
        <end position="342"/>
    </location>
</feature>
<feature type="disulfide bond" evidence="2">
    <location>
        <begin position="351"/>
        <end position="393"/>
    </location>
</feature>
<feature type="disulfide bond" evidence="2">
    <location>
        <begin position="379"/>
        <end position="406"/>
    </location>
</feature>
<feature type="disulfide bond" evidence="2">
    <location>
        <begin position="410"/>
        <end position="453"/>
    </location>
</feature>
<feature type="disulfide bond" evidence="2">
    <location>
        <begin position="439"/>
        <end position="466"/>
    </location>
</feature>
<feature type="disulfide bond" evidence="2">
    <location>
        <begin position="471"/>
        <end position="509"/>
    </location>
</feature>
<feature type="disulfide bond" evidence="2">
    <location>
        <begin position="495"/>
        <end position="522"/>
    </location>
</feature>
<feature type="disulfide bond" evidence="2">
    <location>
        <begin position="527"/>
        <end position="576"/>
    </location>
</feature>
<feature type="disulfide bond" evidence="2">
    <location>
        <begin position="556"/>
        <end position="593"/>
    </location>
</feature>
<feature type="disulfide bond" evidence="2">
    <location>
        <begin position="602"/>
        <end position="644"/>
    </location>
</feature>
<feature type="disulfide bond" evidence="2">
    <location>
        <begin position="630"/>
        <end position="657"/>
    </location>
</feature>
<feature type="disulfide bond" evidence="2">
    <location>
        <begin position="662"/>
        <end position="699"/>
    </location>
</feature>
<feature type="disulfide bond" evidence="2">
    <location>
        <begin position="685"/>
        <end position="714"/>
    </location>
</feature>
<feature type="disulfide bond" evidence="2">
    <location>
        <begin position="719"/>
        <end position="762"/>
    </location>
</feature>
<feature type="disulfide bond" evidence="2">
    <location>
        <begin position="748"/>
        <end position="779"/>
    </location>
</feature>
<feature type="disulfide bond" evidence="2">
    <location>
        <begin position="788"/>
        <end position="830"/>
    </location>
</feature>
<feature type="disulfide bond" evidence="2">
    <location>
        <begin position="816"/>
        <end position="843"/>
    </location>
</feature>
<feature type="disulfide bond" evidence="2">
    <location>
        <begin position="851"/>
        <end position="894"/>
    </location>
</feature>
<feature type="disulfide bond" evidence="2">
    <location>
        <begin position="880"/>
        <end position="907"/>
    </location>
</feature>
<feature type="disulfide bond" evidence="2">
    <location>
        <begin position="912"/>
        <end position="955"/>
    </location>
</feature>
<feature type="disulfide bond" evidence="2">
    <location>
        <begin position="941"/>
        <end position="968"/>
    </location>
</feature>
<feature type="splice variant" id="VSP_001208" description="In isoform B." evidence="27">
    <location>
        <begin position="499"/>
        <end position="524"/>
    </location>
</feature>
<feature type="splice variant" id="VSP_001209" description="In isoform B." evidence="27">
    <original>ITCPPPPVIYNGAHTGSSLEDFPYGTTVTYTC</original>
    <variation>NHLPTTPCYLQWGTHREFLRRFSIWNHGHLHM</variation>
    <location>
        <begin position="525"/>
        <end position="556"/>
    </location>
</feature>
<feature type="splice variant" id="VSP_001210" description="In isoform C and isoform D." evidence="23 24 25 26 28">
    <original>K</original>
    <variation>KGCQSPPGLHHGRHTGGNTVFFVSGMTVDYTCDPGYLLVGNKSIHCMPSGNWSPSAPRCE</variation>
    <location>
        <position position="659"/>
    </location>
</feature>
<feature type="splice variant" id="VSP_001211" description="In isoform D." evidence="23">
    <location>
        <begin position="716"/>
        <end position="723"/>
    </location>
</feature>
<feature type="sequence variant" id="VAR_016164" description="In dbSNP:rs17615." evidence="8 12">
    <original>S</original>
    <variation>N</variation>
    <location>
        <position position="639"/>
    </location>
</feature>
<feature type="sequence variant" id="VAR_016165" description="In dbSNP:rs17618." evidence="20">
    <original>I</original>
    <variation>V</variation>
    <location>
        <position position="993"/>
    </location>
</feature>
<feature type="sequence variant" id="VAR_016166" description="In dbSNP:rs17617." evidence="18 19">
    <original>A</original>
    <variation>E</variation>
    <location>
        <position position="1003"/>
    </location>
</feature>
<feature type="mutagenesis site" description="No effect on affinity for C3." evidence="15">
    <original>R</original>
    <variation>A</variation>
    <location>
        <position position="103"/>
    </location>
</feature>
<feature type="mutagenesis site" description="Reduced affinity for C3." evidence="15">
    <original>D</original>
    <variation>A</variation>
    <location>
        <position position="112"/>
    </location>
</feature>
<feature type="mutagenesis site" description="Strongly reduced affinity for C3." evidence="15">
    <original>K</original>
    <variation>A</variation>
    <location>
        <position position="128"/>
    </location>
</feature>
<feature type="sequence conflict" description="In Ref. 2; CAA68674." evidence="29" ref="2">
    <location>
        <position position="457"/>
    </location>
</feature>
<feature type="sequence conflict" description="In Ref. 3; AAA35784." evidence="29" ref="3">
    <original>A</original>
    <variation>R</variation>
    <location>
        <position position="646"/>
    </location>
</feature>
<feature type="sequence conflict" description="In Ref. 10; AA sequence." evidence="29" ref="10">
    <original>Q</original>
    <variation>D</variation>
    <location>
        <position position="667"/>
    </location>
</feature>
<feature type="sequence conflict" description="In Ref. 3; AAA35784." evidence="29" ref="3">
    <original>G</original>
    <variation>E</variation>
    <location>
        <position position="774"/>
    </location>
</feature>
<feature type="sequence conflict" description="In Ref. 3; AAA35784." evidence="29" ref="3">
    <original>PPVTR</original>
    <variation>L</variation>
    <location>
        <begin position="783"/>
        <end position="787"/>
    </location>
</feature>
<feature type="sequence conflict" description="In Ref. 1; AAA35786/AAB04638." evidence="29" ref="1">
    <original>I</original>
    <variation>M</variation>
    <location>
        <position position="844"/>
    </location>
</feature>
<feature type="sequence conflict" description="In Ref. 3; AAA35784." evidence="29" ref="3">
    <original>L</original>
    <variation>V</variation>
    <location>
        <position position="886"/>
    </location>
</feature>
<feature type="sequence conflict" description="In Ref. 3; AAA35784." evidence="29" ref="3">
    <original>A</original>
    <variation>P</variation>
    <location>
        <position position="890"/>
    </location>
</feature>
<feature type="sequence conflict" description="In Ref. 10; AA sequence." evidence="29" ref="10">
    <original>Q</original>
    <variation>G</variation>
    <location>
        <position position="902"/>
    </location>
</feature>
<feature type="sequence conflict" description="In Ref. 10; AA sequence." evidence="29" ref="10">
    <original>H</original>
    <variation>L</variation>
    <location>
        <position position="906"/>
    </location>
</feature>
<feature type="strand" evidence="33">
    <location>
        <begin position="32"/>
        <end position="34"/>
    </location>
</feature>
<feature type="strand" evidence="33">
    <location>
        <begin position="39"/>
        <end position="41"/>
    </location>
</feature>
<feature type="strand" evidence="33">
    <location>
        <begin position="46"/>
        <end position="51"/>
    </location>
</feature>
<feature type="strand" evidence="33">
    <location>
        <begin position="55"/>
        <end position="59"/>
    </location>
</feature>
<feature type="strand" evidence="33">
    <location>
        <begin position="62"/>
        <end position="66"/>
    </location>
</feature>
<feature type="strand" evidence="33">
    <location>
        <begin position="68"/>
        <end position="72"/>
    </location>
</feature>
<feature type="strand" evidence="33">
    <location>
        <begin position="74"/>
        <end position="77"/>
    </location>
</feature>
<feature type="strand" evidence="33">
    <location>
        <begin position="81"/>
        <end position="83"/>
    </location>
</feature>
<feature type="strand" evidence="33">
    <location>
        <begin position="99"/>
        <end position="103"/>
    </location>
</feature>
<feature type="strand" evidence="33">
    <location>
        <begin position="106"/>
        <end position="109"/>
    </location>
</feature>
<feature type="strand" evidence="33">
    <location>
        <begin position="113"/>
        <end position="118"/>
    </location>
</feature>
<feature type="strand" evidence="33">
    <location>
        <begin position="123"/>
        <end position="126"/>
    </location>
</feature>
<feature type="strand" evidence="33">
    <location>
        <begin position="128"/>
        <end position="132"/>
    </location>
</feature>
<feature type="strand" evidence="33">
    <location>
        <begin position="136"/>
        <end position="141"/>
    </location>
</feature>
<feature type="strand" evidence="33">
    <location>
        <begin position="145"/>
        <end position="147"/>
    </location>
</feature>
<feature type="sequence conflict" description="In Ref. 3; AAA35784." evidence="29" ref="3">
    <original>S</original>
    <variation>P</variation>
    <location sequence="P20023-3">
        <position position="663"/>
    </location>
</feature>
<protein>
    <recommendedName>
        <fullName>Complement receptor type 2</fullName>
        <shortName>Cr2</shortName>
    </recommendedName>
    <alternativeName>
        <fullName>Complement C3d receptor</fullName>
    </alternativeName>
    <alternativeName>
        <fullName>Epstein-Barr virus receptor</fullName>
        <shortName>EBV receptor</shortName>
    </alternativeName>
    <cdAntigenName>CD21</cdAntigenName>
</protein>
<sequence>MGAAGLLGVFLALVAPGVLGISCGSPPPILNGRISYYSTPIAVGTVIRYSCSGTFRLIGEKSLLCITKDKVDGTWDKPAPKCEYFNKYSSCPEPIVPGGYKIRGSTPYRHGDSVTFACKTNFSMNGNKSVWCQANNMWGPTRLPTCVSVFPLECPALPMIHNGHHTSENVGSIAPGLSVTYSCESGYLLVGEKIINCLSSGKWSAVPPTCEEARCKSLGRFPNGKVKEPPILRVGVTANFFCDEGYRLQGPPSSRCVIAGQGVAWTKMPVCEEIFCPSPPPILNGRHIGNSLANVSYGSIVTYTCDPDPEEGVNFILIGESTLRCTVDSQKTGTWSGPAPRCELSTSAVQCPHPQILRGRMVSGQKDRYTYNDTVIFACMFGFTLKGSKQIRCNAQGTWEPSAPVCEKECQAPPNILNGQKEDRHMVRFDPGTSIKYSCNPGYVLVGEESIQCTSEGVWTPPVPQCKVAACEATGRQLLTKPQHQFVRPDVNSSCGEGYKLSGSVYQECQGTIPWFMEIRLCKEITCPPPPVIYNGAHTGSSLEDFPYGTTVTYTCNPGPERGVEFSLIGESTIRCTSNDQERGTWSGPAPLCKLSLLAVQCSHVHIANGYKISGKEAPYFYNDTVTFKCYSGFTLKGSSQIRCKADNTWDPEIPVCEKETCQHVRQSLQELPAGSRVELVNTSCQDGYQLTGHAYQMCQDAENGIWFKKIPLCKVIHCHPPPVIVNGKHTGMMAENFLYGNEVSYECDQGFYLLGEKKLQCRSDSKGHGSWSGPSPQCLRSPPVTRCPNPEVKHGYKLNKTHSAYSHNDIVYVDCNPGFIMNGSRVIRCHTDNTWVPGVPTCIKKAFIGCPPPPKTPNGNHTGGNIARFSPGMSILYSCDQGYLLVGEALLLCTHEGTWSQPAPHCKEVNCSSPADMDGIQKGLEPRKMYQYGAVVTLECEDGYMLEGSPQSQCQSDHQWNPPLAVCRSRSLAPVLCGIAAGLILLTFLIVITLYVISKHRARNYYTDTSQKEAFHLEAREVYSVDPYNPAS</sequence>
<dbReference type="EMBL" id="M26004">
    <property type="protein sequence ID" value="AAA35786.1"/>
    <property type="molecule type" value="mRNA"/>
</dbReference>
<dbReference type="EMBL" id="M26016">
    <property type="protein sequence ID" value="AAB04638.1"/>
    <property type="molecule type" value="Genomic_DNA"/>
</dbReference>
<dbReference type="EMBL" id="M24007">
    <property type="protein sequence ID" value="AAB04638.1"/>
    <property type="status" value="JOINED"/>
    <property type="molecule type" value="Genomic_DNA"/>
</dbReference>
<dbReference type="EMBL" id="M24008">
    <property type="protein sequence ID" value="AAB04638.1"/>
    <property type="status" value="JOINED"/>
    <property type="molecule type" value="Genomic_DNA"/>
</dbReference>
<dbReference type="EMBL" id="M24009">
    <property type="protein sequence ID" value="AAB04638.1"/>
    <property type="status" value="JOINED"/>
    <property type="molecule type" value="Genomic_DNA"/>
</dbReference>
<dbReference type="EMBL" id="M24010">
    <property type="protein sequence ID" value="AAB04638.1"/>
    <property type="status" value="JOINED"/>
    <property type="molecule type" value="Genomic_DNA"/>
</dbReference>
<dbReference type="EMBL" id="M24011">
    <property type="protein sequence ID" value="AAB04638.1"/>
    <property type="status" value="JOINED"/>
    <property type="molecule type" value="Genomic_DNA"/>
</dbReference>
<dbReference type="EMBL" id="M26009">
    <property type="protein sequence ID" value="AAB04638.1"/>
    <property type="status" value="JOINED"/>
    <property type="molecule type" value="Genomic_DNA"/>
</dbReference>
<dbReference type="EMBL" id="M26010">
    <property type="protein sequence ID" value="AAB04638.1"/>
    <property type="status" value="JOINED"/>
    <property type="molecule type" value="Genomic_DNA"/>
</dbReference>
<dbReference type="EMBL" id="M26011">
    <property type="protein sequence ID" value="AAB04638.1"/>
    <property type="status" value="JOINED"/>
    <property type="molecule type" value="Genomic_DNA"/>
</dbReference>
<dbReference type="EMBL" id="M26012">
    <property type="protein sequence ID" value="AAB04638.1"/>
    <property type="status" value="JOINED"/>
    <property type="molecule type" value="Genomic_DNA"/>
</dbReference>
<dbReference type="EMBL" id="M26013">
    <property type="protein sequence ID" value="AAB04638.1"/>
    <property type="status" value="JOINED"/>
    <property type="molecule type" value="Genomic_DNA"/>
</dbReference>
<dbReference type="EMBL" id="M26014">
    <property type="protein sequence ID" value="AAB04638.1"/>
    <property type="status" value="JOINED"/>
    <property type="molecule type" value="Genomic_DNA"/>
</dbReference>
<dbReference type="EMBL" id="M26015">
    <property type="protein sequence ID" value="AAB04638.1"/>
    <property type="status" value="JOINED"/>
    <property type="molecule type" value="Genomic_DNA"/>
</dbReference>
<dbReference type="EMBL" id="Y00649">
    <property type="protein sequence ID" value="CAA68674.1"/>
    <property type="molecule type" value="mRNA"/>
</dbReference>
<dbReference type="EMBL" id="J03565">
    <property type="protein sequence ID" value="AAA35784.1"/>
    <property type="status" value="ALT_FRAME"/>
    <property type="molecule type" value="mRNA"/>
</dbReference>
<dbReference type="EMBL" id="AK223627">
    <property type="protein sequence ID" value="BAD97347.1"/>
    <property type="molecule type" value="mRNA"/>
</dbReference>
<dbReference type="EMBL" id="AK301496">
    <property type="protein sequence ID" value="BAG63007.1"/>
    <property type="molecule type" value="mRNA"/>
</dbReference>
<dbReference type="EMBL" id="EF064746">
    <property type="protein sequence ID" value="ABK41929.1"/>
    <property type="molecule type" value="Genomic_DNA"/>
</dbReference>
<dbReference type="EMBL" id="AL391597">
    <property type="status" value="NOT_ANNOTATED_CDS"/>
    <property type="molecule type" value="Genomic_DNA"/>
</dbReference>
<dbReference type="EMBL" id="AL691452">
    <property type="status" value="NOT_ANNOTATED_CDS"/>
    <property type="molecule type" value="Genomic_DNA"/>
</dbReference>
<dbReference type="EMBL" id="BC090937">
    <property type="protein sequence ID" value="AAH90937.1"/>
    <property type="molecule type" value="mRNA"/>
</dbReference>
<dbReference type="EMBL" id="BC136394">
    <property type="protein sequence ID" value="AAI36395.1"/>
    <property type="molecule type" value="mRNA"/>
</dbReference>
<dbReference type="EMBL" id="S62696">
    <property type="protein sequence ID" value="AAB27186.1"/>
    <property type="molecule type" value="mRNA"/>
</dbReference>
<dbReference type="CCDS" id="CCDS1478.1">
    <molecule id="P20023-1"/>
</dbReference>
<dbReference type="CCDS" id="CCDS31007.1">
    <molecule id="P20023-3"/>
</dbReference>
<dbReference type="PIR" id="JL0028">
    <property type="entry name" value="PL0009"/>
</dbReference>
<dbReference type="RefSeq" id="NP_001006659.1">
    <molecule id="P20023-3"/>
    <property type="nucleotide sequence ID" value="NM_001006658.3"/>
</dbReference>
<dbReference type="RefSeq" id="NP_001868.2">
    <molecule id="P20023-1"/>
    <property type="nucleotide sequence ID" value="NM_001877.4"/>
</dbReference>
<dbReference type="PDB" id="1GHQ">
    <property type="method" value="X-ray"/>
    <property type="resolution" value="2.04 A"/>
    <property type="chains" value="B/C=21-153"/>
</dbReference>
<dbReference type="PDB" id="1LY2">
    <property type="method" value="X-ray"/>
    <property type="resolution" value="1.80 A"/>
    <property type="chains" value="A=22-148"/>
</dbReference>
<dbReference type="PDB" id="1W2R">
    <property type="method" value="X-ray"/>
    <property type="chains" value="A=21-153"/>
</dbReference>
<dbReference type="PDB" id="1W2S">
    <property type="method" value="X-ray"/>
    <property type="chains" value="B=21-153"/>
</dbReference>
<dbReference type="PDB" id="2ATY">
    <property type="method" value="X-ray"/>
    <property type="chains" value="A/B=21-153"/>
</dbReference>
<dbReference type="PDB" id="2GSX">
    <property type="method" value="X-ray"/>
    <property type="chains" value="A=21-971"/>
</dbReference>
<dbReference type="PDB" id="3OED">
    <property type="method" value="X-ray"/>
    <property type="resolution" value="3.16 A"/>
    <property type="chains" value="C/D=20-153"/>
</dbReference>
<dbReference type="PDB" id="8SM0">
    <property type="method" value="X-ray"/>
    <property type="resolution" value="1.68 A"/>
    <property type="chains" value="C=21-149"/>
</dbReference>
<dbReference type="PDB" id="8ZNI">
    <property type="method" value="EM"/>
    <property type="resolution" value="3.29 A"/>
    <property type="chains" value="A=1-971"/>
</dbReference>
<dbReference type="PDBsum" id="1GHQ"/>
<dbReference type="PDBsum" id="1LY2"/>
<dbReference type="PDBsum" id="1W2R"/>
<dbReference type="PDBsum" id="1W2S"/>
<dbReference type="PDBsum" id="2ATY"/>
<dbReference type="PDBsum" id="2GSX"/>
<dbReference type="PDBsum" id="3OED"/>
<dbReference type="PDBsum" id="8SM0"/>
<dbReference type="PDBsum" id="8ZNI"/>
<dbReference type="EMDB" id="EMD-60272"/>
<dbReference type="SMR" id="P20023"/>
<dbReference type="BioGRID" id="107771">
    <property type="interactions" value="13"/>
</dbReference>
<dbReference type="CORUM" id="P20023"/>
<dbReference type="FunCoup" id="P20023">
    <property type="interactions" value="420"/>
</dbReference>
<dbReference type="IntAct" id="P20023">
    <property type="interactions" value="3"/>
</dbReference>
<dbReference type="STRING" id="9606.ENSP00000356024"/>
<dbReference type="GlyCosmos" id="P20023">
    <property type="glycosylation" value="11 sites, No reported glycans"/>
</dbReference>
<dbReference type="GlyGen" id="P20023">
    <property type="glycosylation" value="13 sites, 5 N-linked glycans (5 sites)"/>
</dbReference>
<dbReference type="iPTMnet" id="P20023"/>
<dbReference type="PhosphoSitePlus" id="P20023"/>
<dbReference type="BioMuta" id="CR2"/>
<dbReference type="DMDM" id="215273962"/>
<dbReference type="jPOST" id="P20023"/>
<dbReference type="MassIVE" id="P20023"/>
<dbReference type="PaxDb" id="9606-ENSP00000356024"/>
<dbReference type="PeptideAtlas" id="P20023"/>
<dbReference type="ProteomicsDB" id="53712">
    <molecule id="P20023-1"/>
</dbReference>
<dbReference type="ProteomicsDB" id="53713">
    <molecule id="P20023-2"/>
</dbReference>
<dbReference type="ProteomicsDB" id="53714">
    <molecule id="P20023-3"/>
</dbReference>
<dbReference type="ProteomicsDB" id="53715">
    <molecule id="P20023-4"/>
</dbReference>
<dbReference type="ABCD" id="P20023">
    <property type="antibodies" value="1 sequenced antibody"/>
</dbReference>
<dbReference type="Antibodypedia" id="3624">
    <property type="antibodies" value="1722 antibodies from 49 providers"/>
</dbReference>
<dbReference type="DNASU" id="1380"/>
<dbReference type="Ensembl" id="ENST00000367057.8">
    <molecule id="P20023-3"/>
    <property type="protein sequence ID" value="ENSP00000356024.3"/>
    <property type="gene ID" value="ENSG00000117322.19"/>
</dbReference>
<dbReference type="Ensembl" id="ENST00000367058.7">
    <molecule id="P20023-1"/>
    <property type="protein sequence ID" value="ENSP00000356025.3"/>
    <property type="gene ID" value="ENSG00000117322.19"/>
</dbReference>
<dbReference type="GeneID" id="1380"/>
<dbReference type="KEGG" id="hsa:1380"/>
<dbReference type="MANE-Select" id="ENST00000367057.8">
    <molecule id="P20023-3"/>
    <property type="protein sequence ID" value="ENSP00000356024.3"/>
    <property type="RefSeq nucleotide sequence ID" value="NM_001006658.3"/>
    <property type="RefSeq protein sequence ID" value="NP_001006659.1"/>
</dbReference>
<dbReference type="UCSC" id="uc001hfv.4">
    <molecule id="P20023-1"/>
    <property type="organism name" value="human"/>
</dbReference>
<dbReference type="AGR" id="HGNC:2336"/>
<dbReference type="CTD" id="1380"/>
<dbReference type="DisGeNET" id="1380"/>
<dbReference type="GeneCards" id="CR2"/>
<dbReference type="HGNC" id="HGNC:2336">
    <property type="gene designation" value="CR2"/>
</dbReference>
<dbReference type="HPA" id="ENSG00000117322">
    <property type="expression patterns" value="Tissue enriched (lymphoid)"/>
</dbReference>
<dbReference type="MalaCards" id="CR2"/>
<dbReference type="MIM" id="120650">
    <property type="type" value="gene"/>
</dbReference>
<dbReference type="MIM" id="610927">
    <property type="type" value="phenotype"/>
</dbReference>
<dbReference type="MIM" id="614699">
    <property type="type" value="phenotype"/>
</dbReference>
<dbReference type="neXtProt" id="NX_P20023"/>
<dbReference type="OpenTargets" id="ENSG00000117322"/>
<dbReference type="Orphanet" id="1572">
    <property type="disease" value="Common variable immunodeficiency"/>
</dbReference>
<dbReference type="Orphanet" id="536">
    <property type="disease" value="Systemic lupus erythematosus"/>
</dbReference>
<dbReference type="PharmGKB" id="PA26857"/>
<dbReference type="VEuPathDB" id="HostDB:ENSG00000117322"/>
<dbReference type="eggNOG" id="KOG4297">
    <property type="taxonomic scope" value="Eukaryota"/>
</dbReference>
<dbReference type="GeneTree" id="ENSGT00940000161110"/>
<dbReference type="HOGENOM" id="CLU_005124_0_0_1"/>
<dbReference type="InParanoid" id="P20023"/>
<dbReference type="OMA" id="STYRYNQ"/>
<dbReference type="OrthoDB" id="5804959at2759"/>
<dbReference type="PAN-GO" id="P20023">
    <property type="GO annotations" value="2 GO annotations based on evolutionary models"/>
</dbReference>
<dbReference type="PhylomeDB" id="P20023"/>
<dbReference type="TreeFam" id="TF316872"/>
<dbReference type="PathwayCommons" id="P20023"/>
<dbReference type="Reactome" id="R-HSA-977606">
    <property type="pathway name" value="Regulation of Complement cascade"/>
</dbReference>
<dbReference type="SignaLink" id="P20023"/>
<dbReference type="SIGNOR" id="P20023"/>
<dbReference type="BioGRID-ORCS" id="1380">
    <property type="hits" value="11 hits in 1139 CRISPR screens"/>
</dbReference>
<dbReference type="ChiTaRS" id="CR2">
    <property type="organism name" value="human"/>
</dbReference>
<dbReference type="EvolutionaryTrace" id="P20023"/>
<dbReference type="GeneWiki" id="Complement_receptor_2"/>
<dbReference type="GenomeRNAi" id="1380"/>
<dbReference type="Pharos" id="P20023">
    <property type="development level" value="Tbio"/>
</dbReference>
<dbReference type="PRO" id="PR:P20023"/>
<dbReference type="Proteomes" id="UP000005640">
    <property type="component" value="Chromosome 1"/>
</dbReference>
<dbReference type="RNAct" id="P20023">
    <property type="molecule type" value="protein"/>
</dbReference>
<dbReference type="Bgee" id="ENSG00000117322">
    <property type="expression patterns" value="Expressed in secondary oocyte and 112 other cell types or tissues"/>
</dbReference>
<dbReference type="ExpressionAtlas" id="P20023">
    <property type="expression patterns" value="baseline and differential"/>
</dbReference>
<dbReference type="GO" id="GO:0070062">
    <property type="term" value="C:extracellular exosome"/>
    <property type="evidence" value="ECO:0007005"/>
    <property type="project" value="UniProtKB"/>
</dbReference>
<dbReference type="GO" id="GO:0005615">
    <property type="term" value="C:extracellular space"/>
    <property type="evidence" value="ECO:0000318"/>
    <property type="project" value="GO_Central"/>
</dbReference>
<dbReference type="GO" id="GO:0016020">
    <property type="term" value="C:membrane"/>
    <property type="evidence" value="ECO:0000303"/>
    <property type="project" value="UniProtKB"/>
</dbReference>
<dbReference type="GO" id="GO:0005886">
    <property type="term" value="C:plasma membrane"/>
    <property type="evidence" value="ECO:0000314"/>
    <property type="project" value="UniProt"/>
</dbReference>
<dbReference type="GO" id="GO:0043235">
    <property type="term" value="C:receptor complex"/>
    <property type="evidence" value="ECO:0000314"/>
    <property type="project" value="MGI"/>
</dbReference>
<dbReference type="GO" id="GO:0001848">
    <property type="term" value="F:complement binding"/>
    <property type="evidence" value="ECO:0000314"/>
    <property type="project" value="UniProtKB"/>
</dbReference>
<dbReference type="GO" id="GO:0004875">
    <property type="term" value="F:complement receptor activity"/>
    <property type="evidence" value="ECO:0000304"/>
    <property type="project" value="ProtInc"/>
</dbReference>
<dbReference type="GO" id="GO:0003677">
    <property type="term" value="F:DNA binding"/>
    <property type="evidence" value="ECO:0000314"/>
    <property type="project" value="UniProtKB"/>
</dbReference>
<dbReference type="GO" id="GO:0034987">
    <property type="term" value="F:immunoglobulin receptor binding"/>
    <property type="evidence" value="ECO:0000314"/>
    <property type="project" value="UniProtKB"/>
</dbReference>
<dbReference type="GO" id="GO:0042803">
    <property type="term" value="F:protein homodimerization activity"/>
    <property type="evidence" value="ECO:0000314"/>
    <property type="project" value="MGI"/>
</dbReference>
<dbReference type="GO" id="GO:0004888">
    <property type="term" value="F:transmembrane signaling receptor activity"/>
    <property type="evidence" value="ECO:0000314"/>
    <property type="project" value="UniProt"/>
</dbReference>
<dbReference type="GO" id="GO:0001618">
    <property type="term" value="F:virus receptor activity"/>
    <property type="evidence" value="ECO:0000303"/>
    <property type="project" value="UniProt"/>
</dbReference>
<dbReference type="GO" id="GO:0042113">
    <property type="term" value="P:B cell activation"/>
    <property type="evidence" value="ECO:0000314"/>
    <property type="project" value="UniProt"/>
</dbReference>
<dbReference type="GO" id="GO:0030183">
    <property type="term" value="P:B cell differentiation"/>
    <property type="evidence" value="ECO:0000314"/>
    <property type="project" value="UniProtKB"/>
</dbReference>
<dbReference type="GO" id="GO:0042100">
    <property type="term" value="P:B cell proliferation"/>
    <property type="evidence" value="ECO:0000314"/>
    <property type="project" value="UniProtKB"/>
</dbReference>
<dbReference type="GO" id="GO:0006957">
    <property type="term" value="P:complement activation, alternative pathway"/>
    <property type="evidence" value="ECO:0000315"/>
    <property type="project" value="ARUK-UCL"/>
</dbReference>
<dbReference type="GO" id="GO:0006958">
    <property type="term" value="P:complement activation, classical pathway"/>
    <property type="evidence" value="ECO:0007669"/>
    <property type="project" value="UniProtKB-KW"/>
</dbReference>
<dbReference type="GO" id="GO:0006955">
    <property type="term" value="P:immune response"/>
    <property type="evidence" value="ECO:0000303"/>
    <property type="project" value="UniProtKB"/>
</dbReference>
<dbReference type="GO" id="GO:0045959">
    <property type="term" value="P:negative regulation of complement activation, classical pathway"/>
    <property type="evidence" value="ECO:0000318"/>
    <property type="project" value="GO_Central"/>
</dbReference>
<dbReference type="GO" id="GO:0046718">
    <property type="term" value="P:symbiont entry into host cell"/>
    <property type="evidence" value="ECO:0000314"/>
    <property type="project" value="UniProt"/>
</dbReference>
<dbReference type="GO" id="GO:0002456">
    <property type="term" value="P:T cell mediated immunity"/>
    <property type="evidence" value="ECO:0000318"/>
    <property type="project" value="GO_Central"/>
</dbReference>
<dbReference type="GO" id="GO:0060337">
    <property type="term" value="P:type I interferon-mediated signaling pathway"/>
    <property type="evidence" value="ECO:0000314"/>
    <property type="project" value="UniProt"/>
</dbReference>
<dbReference type="CDD" id="cd00033">
    <property type="entry name" value="CCP"/>
    <property type="match status" value="13"/>
</dbReference>
<dbReference type="FunFam" id="2.10.70.10:FF:000070">
    <property type="entry name" value="Complement C3d receptor 2"/>
    <property type="match status" value="3"/>
</dbReference>
<dbReference type="FunFam" id="2.10.70.10:FF:000069">
    <property type="entry name" value="Complement component receptor type 1"/>
    <property type="match status" value="1"/>
</dbReference>
<dbReference type="FunFam" id="2.10.70.10:FF:000055">
    <property type="entry name" value="Complement decay-accelerating factor, GPI-anchored"/>
    <property type="match status" value="1"/>
</dbReference>
<dbReference type="FunFam" id="2.10.70.10:FF:000008">
    <property type="entry name" value="Complement receptor type 1"/>
    <property type="match status" value="2"/>
</dbReference>
<dbReference type="FunFam" id="2.10.70.10:FF:000151">
    <property type="entry name" value="Complement receptor type 2"/>
    <property type="match status" value="1"/>
</dbReference>
<dbReference type="FunFam" id="2.10.70.10:FF:000014">
    <property type="entry name" value="Membrane cofactor protein"/>
    <property type="match status" value="4"/>
</dbReference>
<dbReference type="Gene3D" id="2.10.70.10">
    <property type="entry name" value="Complement Module, domain 1"/>
    <property type="match status" value="14"/>
</dbReference>
<dbReference type="InterPro" id="IPR051277">
    <property type="entry name" value="SEZ6_CSMD_C4BPB_Regulators"/>
</dbReference>
<dbReference type="InterPro" id="IPR035976">
    <property type="entry name" value="Sushi/SCR/CCP_sf"/>
</dbReference>
<dbReference type="InterPro" id="IPR000436">
    <property type="entry name" value="Sushi_SCR_CCP_dom"/>
</dbReference>
<dbReference type="PANTHER" id="PTHR45656">
    <property type="entry name" value="PROTEIN CBR-CLEC-78"/>
    <property type="match status" value="1"/>
</dbReference>
<dbReference type="PANTHER" id="PTHR45656:SF4">
    <property type="entry name" value="PROTEIN CBR-CLEC-78"/>
    <property type="match status" value="1"/>
</dbReference>
<dbReference type="Pfam" id="PF00084">
    <property type="entry name" value="Sushi"/>
    <property type="match status" value="13"/>
</dbReference>
<dbReference type="SMART" id="SM00032">
    <property type="entry name" value="CCP"/>
    <property type="match status" value="14"/>
</dbReference>
<dbReference type="SUPFAM" id="SSF57535">
    <property type="entry name" value="Complement control module/SCR domain"/>
    <property type="match status" value="15"/>
</dbReference>
<dbReference type="PROSITE" id="PS50923">
    <property type="entry name" value="SUSHI"/>
    <property type="match status" value="15"/>
</dbReference>
<proteinExistence type="evidence at protein level"/>
<evidence type="ECO:0000255" key="1"/>
<evidence type="ECO:0000255" key="2">
    <source>
        <dbReference type="PROSITE-ProRule" id="PRU00302"/>
    </source>
</evidence>
<evidence type="ECO:0000269" key="3">
    <source>
    </source>
</evidence>
<evidence type="ECO:0000269" key="4">
    <source>
    </source>
</evidence>
<evidence type="ECO:0000269" key="5">
    <source>
    </source>
</evidence>
<evidence type="ECO:0000269" key="6">
    <source>
    </source>
</evidence>
<evidence type="ECO:0000269" key="7">
    <source>
    </source>
</evidence>
<evidence type="ECO:0000269" key="8">
    <source>
    </source>
</evidence>
<evidence type="ECO:0000269" key="9">
    <source>
    </source>
</evidence>
<evidence type="ECO:0000269" key="10">
    <source>
    </source>
</evidence>
<evidence type="ECO:0000269" key="11">
    <source>
    </source>
</evidence>
<evidence type="ECO:0000269" key="12">
    <source>
    </source>
</evidence>
<evidence type="ECO:0000269" key="13">
    <source>
    </source>
</evidence>
<evidence type="ECO:0000269" key="14">
    <source>
    </source>
</evidence>
<evidence type="ECO:0000269" key="15">
    <source>
    </source>
</evidence>
<evidence type="ECO:0000269" key="16">
    <source>
    </source>
</evidence>
<evidence type="ECO:0000269" key="17">
    <source>
    </source>
</evidence>
<evidence type="ECO:0000269" key="18">
    <source>
    </source>
</evidence>
<evidence type="ECO:0000269" key="19">
    <source>
    </source>
</evidence>
<evidence type="ECO:0000269" key="20">
    <source>
    </source>
</evidence>
<evidence type="ECO:0000269" key="21">
    <source>
    </source>
</evidence>
<evidence type="ECO:0000269" key="22">
    <source>
    </source>
</evidence>
<evidence type="ECO:0000303" key="23">
    <source>
    </source>
</evidence>
<evidence type="ECO:0000303" key="24">
    <source>
    </source>
</evidence>
<evidence type="ECO:0000303" key="25">
    <source>
    </source>
</evidence>
<evidence type="ECO:0000303" key="26">
    <source>
    </source>
</evidence>
<evidence type="ECO:0000303" key="27">
    <source>
    </source>
</evidence>
<evidence type="ECO:0000303" key="28">
    <source ref="6"/>
</evidence>
<evidence type="ECO:0000305" key="29"/>
<evidence type="ECO:0007744" key="30">
    <source>
        <dbReference type="PDB" id="1GHQ"/>
    </source>
</evidence>
<evidence type="ECO:0007744" key="31">
    <source>
        <dbReference type="PDB" id="1LY2"/>
    </source>
</evidence>
<evidence type="ECO:0007744" key="32">
    <source>
        <dbReference type="PDB" id="3OED"/>
    </source>
</evidence>
<evidence type="ECO:0007829" key="33">
    <source>
        <dbReference type="PDB" id="8SM0"/>
    </source>
</evidence>
<gene>
    <name type="primary">CR2</name>
    <name type="synonym">C3DR</name>
</gene>
<accession>P20023</accession>
<accession>C9JHD2</accession>
<accession>Q13866</accession>
<accession>Q14212</accession>
<accession>Q53EL2</accession>
<accession>Q5BKT9</accession>
<accession>Q5SR46</accession>
<accession>Q5SR48</accession>
<name>CR2_HUMAN</name>
<comment type="function">
    <text evidence="5 6 7 13 15 21 22">Serves as a receptor for various ligands including complement component CD3d, HNRNPU OR IFNA1 (PubMed:1849076, PubMed:21527715, PubMed:7753047). When C3d is bound to antigens, attaches to C3d on B-cell surface and thereby facilitates the recognition and uptake of antigens by B-cells (PubMed:21527715). This interaction enhances B-cell activation and subsequent immune responses. Forms a complex with several partners on the surface of B-cells including CD19, FCRL5 and CD81, to form the B-cell coreceptor complex that plays a crucial role in B-cell activation and signaling (PubMed:1383329, PubMed:30107486). Also induces specific intracellular signaling separately from the BCR and CD19 by activating the tyrosine kinase SRC, which then phosphorylates nucleolin/NCL and triggers AKT and GSK3 kinase activities in a SYK/CD19-independent manner (PubMed:12938232). Acts as a ligand for CD23 (FcepsilonRII), a low-affinity receptor for IgE, which is expressed on B-cells and other immune cells, and thus participates in the regulation of IgE production (PubMed:1386409).</text>
</comment>
<comment type="function">
    <text evidence="17">(Microbial infection) Acts as a receptor for Epstein-Barr virus.</text>
</comment>
<comment type="subunit">
    <text evidence="3 6 7 9 10 11 13 15 21">Interacts (via Sushi domain 1 and 2) with C3 (PubMed:11387479, PubMed:21527715). Interacts with CD19 (PubMed:1702139). Part of a complex composed of CD19, CR2/CD21, CD81 and IFITM1/CD225 in the membrane of mature B-cells (PubMed:1383329). Interacts (via Sushi domain 1 and 2) with FCER2 (via the C-terminus). Interacts with CD23 (PubMed:1386409). Interacts with FCRL5 (PubMed:30107486). Interacts with CR1 (PubMed:1708808). Interacts with INFNA1 (PubMed:1849076).</text>
</comment>
<comment type="subunit">
    <text evidence="17">(Microbial infection) Interacts with Epstein-Barr virus gp350 protein.</text>
</comment>
<comment type="interaction">
    <interactant intactId="EBI-2872467">
        <id>P20023</id>
    </interactant>
    <interactant intactId="EBI-905851">
        <id>P01024</id>
        <label>C3</label>
    </interactant>
    <organismsDiffer>false</organismsDiffer>
    <experiments>4</experiments>
</comment>
<comment type="subcellular location">
    <subcellularLocation>
        <location evidence="6 10">Cell membrane</location>
        <topology>Single-pass type I membrane protein</topology>
    </subcellularLocation>
</comment>
<comment type="alternative products">
    <event type="alternative splicing"/>
    <isoform>
        <id>P20023-1</id>
        <name>A</name>
        <sequence type="displayed"/>
    </isoform>
    <isoform>
        <id>P20023-2</id>
        <name>B</name>
        <sequence type="described" ref="VSP_001208 VSP_001209"/>
    </isoform>
    <isoform>
        <id>P20023-3</id>
        <name>C</name>
        <sequence type="described" ref="VSP_001210"/>
    </isoform>
    <isoform>
        <id>P20023-4</id>
        <name>D</name>
        <sequence type="described" ref="VSP_001210 VSP_001211"/>
    </isoform>
</comment>
<comment type="tissue specificity">
    <text>Mature B-lymphocytes, T-lymphocytes, pharyngeal epithelial cells, astrocytes and follicular dendritic cells of the spleen.</text>
</comment>
<comment type="disease" evidence="12">
    <disease id="DI-02651">
        <name>Systemic lupus erythematosus 9</name>
        <acronym>SLEB9</acronym>
        <description>A chronic, relapsing, inflammatory, and often febrile multisystemic disorder of connective tissue, characterized principally by involvement of the skin, joints, kidneys and serosal membranes. It is of unknown etiology, but is thought to represent a failure of the regulatory mechanisms of the autoimmune system. The disease is marked by a wide range of system dysfunctions, an elevated erythrocyte sedimentation rate, and the formation of LE cells in the blood or bone marrow.</description>
        <dbReference type="MIM" id="610927"/>
    </disease>
    <text>Disease susceptibility is associated with variants affecting the gene represented in this entry.</text>
</comment>
<comment type="disease" evidence="16">
    <disease id="DI-03489">
        <name>Immunodeficiency, common variable, 7</name>
        <acronym>CVID7</acronym>
        <description>A primary immunodeficiency characterized by antibody deficiency, hypogammaglobulinemia, recurrent bacterial infections and an inability to mount an antibody response to antigen. The defect results from a failure of B-cell differentiation and impaired secretion of immunoglobulins; the numbers of circulating B-cells is usually in the normal range, but can be low.</description>
        <dbReference type="MIM" id="614699"/>
    </disease>
    <text>The disease is caused by variants affecting the gene represented in this entry.</text>
</comment>
<comment type="similarity">
    <text evidence="29">Belongs to the receptors of complement activation (RCA) family.</text>
</comment>
<comment type="sequence caution" evidence="29">
    <conflict type="frameshift">
        <sequence resource="EMBL-CDS" id="AAA35784"/>
    </conflict>
</comment>
<keyword id="KW-0002">3D-structure</keyword>
<keyword id="KW-0025">Alternative splicing</keyword>
<keyword id="KW-1003">Cell membrane</keyword>
<keyword id="KW-0180">Complement pathway</keyword>
<keyword id="KW-0903">Direct protein sequencing</keyword>
<keyword id="KW-1015">Disulfide bond</keyword>
<keyword id="KW-0325">Glycoprotein</keyword>
<keyword id="KW-1183">Host cell receptor for virus entry</keyword>
<keyword id="KW-0945">Host-virus interaction</keyword>
<keyword id="KW-0391">Immunity</keyword>
<keyword id="KW-0399">Innate immunity</keyword>
<keyword id="KW-0472">Membrane</keyword>
<keyword id="KW-1267">Proteomics identification</keyword>
<keyword id="KW-0675">Receptor</keyword>
<keyword id="KW-1185">Reference proteome</keyword>
<keyword id="KW-0677">Repeat</keyword>
<keyword id="KW-0732">Signal</keyword>
<keyword id="KW-0768">Sushi</keyword>
<keyword id="KW-0772">Systemic lupus erythematosus</keyword>
<keyword id="KW-0812">Transmembrane</keyword>
<keyword id="KW-1133">Transmembrane helix</keyword>
<reference key="1">
    <citation type="journal article" date="1989" name="J. Biol. Chem.">
        <title>Genomic organization and polymorphisms of the human C3d/Epstein-Barr virus receptor.</title>
        <authorList>
            <person name="Fujisaku A."/>
            <person name="Harley J.B."/>
            <person name="Frank M.B."/>
            <person name="Gruner B.A."/>
            <person name="Frazier B."/>
            <person name="Holers V.M."/>
        </authorList>
    </citation>
    <scope>NUCLEOTIDE SEQUENCE [GENOMIC DNA / MRNA]</scope>
    <scope>VARIANT GLU-1003</scope>
</reference>
<reference key="2">
    <citation type="journal article" date="1988" name="J. Exp. Med.">
        <title>Structure of the human B lymphocyte receptor for C3d and the Epstein-Barr virus and relatedness to other members of the family of C3/C4 binding proteins.</title>
        <authorList>
            <person name="Weis J.J."/>
            <person name="Toothaker L.E."/>
            <person name="Smith J.A."/>
            <person name="Weis J.H."/>
            <person name="Fearon D.T."/>
        </authorList>
    </citation>
    <scope>NUCLEOTIDE SEQUENCE [MRNA]</scope>
    <scope>VARIANT VAL-993</scope>
    <source>
        <tissue>B-cell</tissue>
    </source>
</reference>
<reference key="3">
    <citation type="journal article" date="1987" name="Proc. Natl. Acad. Sci. U.S.A.">
        <title>Molecular cloning of the cDNA encoding the Epstein-Barr virus.C3d receptor (complement receptor type 2) of human b lymphocytes.</title>
        <authorList>
            <person name="Moore M."/>
            <person name="Cooper N."/>
            <person name="Tack B."/>
            <person name="Nemerow G."/>
        </authorList>
    </citation>
    <scope>NUCLEOTIDE SEQUENCE [MRNA] (ISOFORM C)</scope>
    <scope>VARIANT GLU-1003</scope>
</reference>
<reference key="4">
    <citation type="journal article" date="1998" name="Mol. Immunol.">
        <title>Evidence for a new transcript of the Epstein-Barr virus/C3d receptor (CR2, CD21) which is due to alternative exon usage.</title>
        <authorList>
            <person name="Barel M."/>
            <person name="Balbo M."/>
            <person name="Frade R."/>
        </authorList>
    </citation>
    <scope>NUCLEOTIDE SEQUENCE [MRNA] (ISOFORMS A; C AND D)</scope>
</reference>
<reference key="5">
    <citation type="journal article" date="2004" name="Nat. Genet.">
        <title>Complete sequencing and characterization of 21,243 full-length human cDNAs.</title>
        <authorList>
            <person name="Ota T."/>
            <person name="Suzuki Y."/>
            <person name="Nishikawa T."/>
            <person name="Otsuki T."/>
            <person name="Sugiyama T."/>
            <person name="Irie R."/>
            <person name="Wakamatsu A."/>
            <person name="Hayashi K."/>
            <person name="Sato H."/>
            <person name="Nagai K."/>
            <person name="Kimura K."/>
            <person name="Makita H."/>
            <person name="Sekine M."/>
            <person name="Obayashi M."/>
            <person name="Nishi T."/>
            <person name="Shibahara T."/>
            <person name="Tanaka T."/>
            <person name="Ishii S."/>
            <person name="Yamamoto J."/>
            <person name="Saito K."/>
            <person name="Kawai Y."/>
            <person name="Isono Y."/>
            <person name="Nakamura Y."/>
            <person name="Nagahari K."/>
            <person name="Murakami K."/>
            <person name="Yasuda T."/>
            <person name="Iwayanagi T."/>
            <person name="Wagatsuma M."/>
            <person name="Shiratori A."/>
            <person name="Sudo H."/>
            <person name="Hosoiri T."/>
            <person name="Kaku Y."/>
            <person name="Kodaira H."/>
            <person name="Kondo H."/>
            <person name="Sugawara M."/>
            <person name="Takahashi M."/>
            <person name="Kanda K."/>
            <person name="Yokoi T."/>
            <person name="Furuya T."/>
            <person name="Kikkawa E."/>
            <person name="Omura Y."/>
            <person name="Abe K."/>
            <person name="Kamihara K."/>
            <person name="Katsuta N."/>
            <person name="Sato K."/>
            <person name="Tanikawa M."/>
            <person name="Yamazaki M."/>
            <person name="Ninomiya K."/>
            <person name="Ishibashi T."/>
            <person name="Yamashita H."/>
            <person name="Murakawa K."/>
            <person name="Fujimori K."/>
            <person name="Tanai H."/>
            <person name="Kimata M."/>
            <person name="Watanabe M."/>
            <person name="Hiraoka S."/>
            <person name="Chiba Y."/>
            <person name="Ishida S."/>
            <person name="Ono Y."/>
            <person name="Takiguchi S."/>
            <person name="Watanabe S."/>
            <person name="Yosida M."/>
            <person name="Hotuta T."/>
            <person name="Kusano J."/>
            <person name="Kanehori K."/>
            <person name="Takahashi-Fujii A."/>
            <person name="Hara H."/>
            <person name="Tanase T.-O."/>
            <person name="Nomura Y."/>
            <person name="Togiya S."/>
            <person name="Komai F."/>
            <person name="Hara R."/>
            <person name="Takeuchi K."/>
            <person name="Arita M."/>
            <person name="Imose N."/>
            <person name="Musashino K."/>
            <person name="Yuuki H."/>
            <person name="Oshima A."/>
            <person name="Sasaki N."/>
            <person name="Aotsuka S."/>
            <person name="Yoshikawa Y."/>
            <person name="Matsunawa H."/>
            <person name="Ichihara T."/>
            <person name="Shiohata N."/>
            <person name="Sano S."/>
            <person name="Moriya S."/>
            <person name="Momiyama H."/>
            <person name="Satoh N."/>
            <person name="Takami S."/>
            <person name="Terashima Y."/>
            <person name="Suzuki O."/>
            <person name="Nakagawa S."/>
            <person name="Senoh A."/>
            <person name="Mizoguchi H."/>
            <person name="Goto Y."/>
            <person name="Shimizu F."/>
            <person name="Wakebe H."/>
            <person name="Hishigaki H."/>
            <person name="Watanabe T."/>
            <person name="Sugiyama A."/>
            <person name="Takemoto M."/>
            <person name="Kawakami B."/>
            <person name="Yamazaki M."/>
            <person name="Watanabe K."/>
            <person name="Kumagai A."/>
            <person name="Itakura S."/>
            <person name="Fukuzumi Y."/>
            <person name="Fujimori Y."/>
            <person name="Komiyama M."/>
            <person name="Tashiro H."/>
            <person name="Tanigami A."/>
            <person name="Fujiwara T."/>
            <person name="Ono T."/>
            <person name="Yamada K."/>
            <person name="Fujii Y."/>
            <person name="Ozaki K."/>
            <person name="Hirao M."/>
            <person name="Ohmori Y."/>
            <person name="Kawabata A."/>
            <person name="Hikiji T."/>
            <person name="Kobatake N."/>
            <person name="Inagaki H."/>
            <person name="Ikema Y."/>
            <person name="Okamoto S."/>
            <person name="Okitani R."/>
            <person name="Kawakami T."/>
            <person name="Noguchi S."/>
            <person name="Itoh T."/>
            <person name="Shigeta K."/>
            <person name="Senba T."/>
            <person name="Matsumura K."/>
            <person name="Nakajima Y."/>
            <person name="Mizuno T."/>
            <person name="Morinaga M."/>
            <person name="Sasaki M."/>
            <person name="Togashi T."/>
            <person name="Oyama M."/>
            <person name="Hata H."/>
            <person name="Watanabe M."/>
            <person name="Komatsu T."/>
            <person name="Mizushima-Sugano J."/>
            <person name="Satoh T."/>
            <person name="Shirai Y."/>
            <person name="Takahashi Y."/>
            <person name="Nakagawa K."/>
            <person name="Okumura K."/>
            <person name="Nagase T."/>
            <person name="Nomura N."/>
            <person name="Kikuchi H."/>
            <person name="Masuho Y."/>
            <person name="Yamashita R."/>
            <person name="Nakai K."/>
            <person name="Yada T."/>
            <person name="Nakamura Y."/>
            <person name="Ohara O."/>
            <person name="Isogai T."/>
            <person name="Sugano S."/>
        </authorList>
    </citation>
    <scope>NUCLEOTIDE SEQUENCE [LARGE SCALE MRNA] (ISOFORM C)</scope>
    <source>
        <tissue>Synovium</tissue>
    </source>
</reference>
<reference key="6">
    <citation type="submission" date="2005-04" db="EMBL/GenBank/DDBJ databases">
        <authorList>
            <person name="Totoki Y."/>
            <person name="Toyoda A."/>
            <person name="Takeda T."/>
            <person name="Sakaki Y."/>
            <person name="Tanaka A."/>
            <person name="Yokoyama S."/>
        </authorList>
    </citation>
    <scope>NUCLEOTIDE SEQUENCE [LARGE SCALE MRNA] (ISOFORM C)</scope>
    <source>
        <tissue>Spleen</tissue>
    </source>
</reference>
<reference key="7">
    <citation type="submission" date="2006-10" db="EMBL/GenBank/DDBJ databases">
        <authorList>
            <person name="Livingston R.J."/>
            <person name="Shaffer T."/>
            <person name="McFarland I."/>
            <person name="Nguyen C.P."/>
            <person name="Stanaway I.B."/>
            <person name="Rajkumar N."/>
            <person name="Johnson E.J."/>
            <person name="da Ponte S.H."/>
            <person name="Willa H."/>
            <person name="Ahearn M.O."/>
            <person name="Bertucci C."/>
            <person name="Acklestad J."/>
            <person name="Carroll A."/>
            <person name="Swanson J."/>
            <person name="Gildersleeve H.I."/>
            <person name="Nickerson D.A."/>
        </authorList>
    </citation>
    <scope>NUCLEOTIDE SEQUENCE [GENOMIC DNA]</scope>
</reference>
<reference key="8">
    <citation type="journal article" date="2006" name="Nature">
        <title>The DNA sequence and biological annotation of human chromosome 1.</title>
        <authorList>
            <person name="Gregory S.G."/>
            <person name="Barlow K.F."/>
            <person name="McLay K.E."/>
            <person name="Kaul R."/>
            <person name="Swarbreck D."/>
            <person name="Dunham A."/>
            <person name="Scott C.E."/>
            <person name="Howe K.L."/>
            <person name="Woodfine K."/>
            <person name="Spencer C.C.A."/>
            <person name="Jones M.C."/>
            <person name="Gillson C."/>
            <person name="Searle S."/>
            <person name="Zhou Y."/>
            <person name="Kokocinski F."/>
            <person name="McDonald L."/>
            <person name="Evans R."/>
            <person name="Phillips K."/>
            <person name="Atkinson A."/>
            <person name="Cooper R."/>
            <person name="Jones C."/>
            <person name="Hall R.E."/>
            <person name="Andrews T.D."/>
            <person name="Lloyd C."/>
            <person name="Ainscough R."/>
            <person name="Almeida J.P."/>
            <person name="Ambrose K.D."/>
            <person name="Anderson F."/>
            <person name="Andrew R.W."/>
            <person name="Ashwell R.I.S."/>
            <person name="Aubin K."/>
            <person name="Babbage A.K."/>
            <person name="Bagguley C.L."/>
            <person name="Bailey J."/>
            <person name="Beasley H."/>
            <person name="Bethel G."/>
            <person name="Bird C.P."/>
            <person name="Bray-Allen S."/>
            <person name="Brown J.Y."/>
            <person name="Brown A.J."/>
            <person name="Buckley D."/>
            <person name="Burton J."/>
            <person name="Bye J."/>
            <person name="Carder C."/>
            <person name="Chapman J.C."/>
            <person name="Clark S.Y."/>
            <person name="Clarke G."/>
            <person name="Clee C."/>
            <person name="Cobley V."/>
            <person name="Collier R.E."/>
            <person name="Corby N."/>
            <person name="Coville G.J."/>
            <person name="Davies J."/>
            <person name="Deadman R."/>
            <person name="Dunn M."/>
            <person name="Earthrowl M."/>
            <person name="Ellington A.G."/>
            <person name="Errington H."/>
            <person name="Frankish A."/>
            <person name="Frankland J."/>
            <person name="French L."/>
            <person name="Garner P."/>
            <person name="Garnett J."/>
            <person name="Gay L."/>
            <person name="Ghori M.R.J."/>
            <person name="Gibson R."/>
            <person name="Gilby L.M."/>
            <person name="Gillett W."/>
            <person name="Glithero R.J."/>
            <person name="Grafham D.V."/>
            <person name="Griffiths C."/>
            <person name="Griffiths-Jones S."/>
            <person name="Grocock R."/>
            <person name="Hammond S."/>
            <person name="Harrison E.S.I."/>
            <person name="Hart E."/>
            <person name="Haugen E."/>
            <person name="Heath P.D."/>
            <person name="Holmes S."/>
            <person name="Holt K."/>
            <person name="Howden P.J."/>
            <person name="Hunt A.R."/>
            <person name="Hunt S.E."/>
            <person name="Hunter G."/>
            <person name="Isherwood J."/>
            <person name="James R."/>
            <person name="Johnson C."/>
            <person name="Johnson D."/>
            <person name="Joy A."/>
            <person name="Kay M."/>
            <person name="Kershaw J.K."/>
            <person name="Kibukawa M."/>
            <person name="Kimberley A.M."/>
            <person name="King A."/>
            <person name="Knights A.J."/>
            <person name="Lad H."/>
            <person name="Laird G."/>
            <person name="Lawlor S."/>
            <person name="Leongamornlert D.A."/>
            <person name="Lloyd D.M."/>
            <person name="Loveland J."/>
            <person name="Lovell J."/>
            <person name="Lush M.J."/>
            <person name="Lyne R."/>
            <person name="Martin S."/>
            <person name="Mashreghi-Mohammadi M."/>
            <person name="Matthews L."/>
            <person name="Matthews N.S.W."/>
            <person name="McLaren S."/>
            <person name="Milne S."/>
            <person name="Mistry S."/>
            <person name="Moore M.J.F."/>
            <person name="Nickerson T."/>
            <person name="O'Dell C.N."/>
            <person name="Oliver K."/>
            <person name="Palmeiri A."/>
            <person name="Palmer S.A."/>
            <person name="Parker A."/>
            <person name="Patel D."/>
            <person name="Pearce A.V."/>
            <person name="Peck A.I."/>
            <person name="Pelan S."/>
            <person name="Phelps K."/>
            <person name="Phillimore B.J."/>
            <person name="Plumb R."/>
            <person name="Rajan J."/>
            <person name="Raymond C."/>
            <person name="Rouse G."/>
            <person name="Saenphimmachak C."/>
            <person name="Sehra H.K."/>
            <person name="Sheridan E."/>
            <person name="Shownkeen R."/>
            <person name="Sims S."/>
            <person name="Skuce C.D."/>
            <person name="Smith M."/>
            <person name="Steward C."/>
            <person name="Subramanian S."/>
            <person name="Sycamore N."/>
            <person name="Tracey A."/>
            <person name="Tromans A."/>
            <person name="Van Helmond Z."/>
            <person name="Wall M."/>
            <person name="Wallis J.M."/>
            <person name="White S."/>
            <person name="Whitehead S.L."/>
            <person name="Wilkinson J.E."/>
            <person name="Willey D.L."/>
            <person name="Williams H."/>
            <person name="Wilming L."/>
            <person name="Wray P.W."/>
            <person name="Wu Z."/>
            <person name="Coulson A."/>
            <person name="Vaudin M."/>
            <person name="Sulston J.E."/>
            <person name="Durbin R.M."/>
            <person name="Hubbard T."/>
            <person name="Wooster R."/>
            <person name="Dunham I."/>
            <person name="Carter N.P."/>
            <person name="McVean G."/>
            <person name="Ross M.T."/>
            <person name="Harrow J."/>
            <person name="Olson M.V."/>
            <person name="Beck S."/>
            <person name="Rogers J."/>
            <person name="Bentley D.R."/>
        </authorList>
    </citation>
    <scope>NUCLEOTIDE SEQUENCE [LARGE SCALE GENOMIC DNA]</scope>
</reference>
<reference key="9">
    <citation type="journal article" date="2004" name="Genome Res.">
        <title>The status, quality, and expansion of the NIH full-length cDNA project: the Mammalian Gene Collection (MGC).</title>
        <authorList>
            <consortium name="The MGC Project Team"/>
        </authorList>
    </citation>
    <scope>NUCLEOTIDE SEQUENCE [LARGE SCALE MRNA] (ISOFORMS A AND C)</scope>
    <scope>VARIANT ASN-639</scope>
    <source>
        <tissue>Lymph</tissue>
    </source>
</reference>
<reference key="10">
    <citation type="journal article" date="1986" name="Proc. Natl. Acad. Sci. U.S.A.">
        <title>Identification of a partial cDNA clone for the C3d/Epstein-Barr virus receptor of human B lymphocytes: homology with the receptor for fragments C3b and C4b of the third and fourth components of complement.</title>
        <authorList>
            <person name="Weis J.J."/>
            <person name="Fearon D.T."/>
            <person name="Klickstein L.B."/>
            <person name="Wong W.W."/>
            <person name="Richards S.A."/>
            <person name="de Bruyn Kops A."/>
            <person name="Smith J.A."/>
            <person name="Weis J.H."/>
        </authorList>
    </citation>
    <scope>PROTEIN SEQUENCE OF 226-233; 256-267; 332-341; 667-677 AND 898-908</scope>
</reference>
<reference key="11">
    <citation type="journal article" date="1993" name="J. Immunol.">
        <title>Characterization of the EBV/C3d receptor on the human Jurkat T cell line: evidence for a novel transcript.</title>
        <authorList>
            <person name="Sinha S.K."/>
            <person name="Todd S.C."/>
            <person name="Hedrick J.A."/>
            <person name="Speiser C.L."/>
            <person name="Lambris J.D."/>
            <person name="Tsoukas C.D."/>
        </authorList>
    </citation>
    <scope>NUCLEOTIDE SEQUENCE [MRNA] OF 492-556 (ISOFORM B)</scope>
</reference>
<reference key="12">
    <citation type="journal article" date="1988" name="J. Virol.">
        <title>Soluble gp350/220 and deletion mutant glycoproteins block Epstein-Barr virus adsorption to lymphocytes.</title>
        <authorList>
            <person name="Tanner J."/>
            <person name="Whang Y."/>
            <person name="Sample J."/>
            <person name="Sears A."/>
            <person name="Kieff E."/>
        </authorList>
    </citation>
    <scope>FUNCTION (MICROBIAL INFECTION)</scope>
    <scope>INTERACTION WITH EPSTEIN-BARR VIRUS GP350 PROTEIN (MICROBIAL INFECTION)</scope>
</reference>
<reference key="13">
    <citation type="journal article" date="1991" name="J. Exp. Med.">
        <title>Intersection of the complement and immune systems: a signal transduction complex of the B lymphocyte-containing complement receptor type 2 and CD19.</title>
        <authorList>
            <person name="Matsumoto A.K."/>
            <person name="Kopicky-Burd J."/>
            <person name="Carter R.H."/>
            <person name="Tuveson D.A."/>
            <person name="Tedder T.F."/>
            <person name="Fearon D.T."/>
        </authorList>
    </citation>
    <scope>INTERACTION WITH CD19</scope>
    <scope>SUBCELLULAR LOCATION</scope>
</reference>
<reference key="14">
    <citation type="journal article" date="1991" name="J. Exp. Med.">
        <title>Molecular interactions of complement receptors on B lymphocytes: a CR1/CR2 complex distinct from the CR2/CD19 complex.</title>
        <authorList>
            <person name="Tuveson D.A."/>
            <person name="Ahearn J.M."/>
            <person name="Matsumoto A.K."/>
            <person name="Fearon D.T."/>
        </authorList>
    </citation>
    <scope>INTERACTION WITH CR1</scope>
</reference>
<reference key="15">
    <citation type="journal article" date="1991" name="EMBO J.">
        <title>Epstein Barr virus/complement C3d receptor is an interferon alpha receptor.</title>
        <authorList>
            <person name="Delcayre A.X."/>
            <person name="Salas F."/>
            <person name="Mathur S."/>
            <person name="Kovats K."/>
            <person name="Lotz M."/>
            <person name="Lernhardt W."/>
        </authorList>
    </citation>
    <scope>FUNCTION</scope>
    <scope>INTERACTION WITH IFNA1</scope>
</reference>
<reference key="16">
    <citation type="journal article" date="1992" name="J. Immunol.">
        <title>The CD19/CD21 signal transducing complex of human B lymphocytes includes the target of antiproliferative antibody-1 and Leu-13 molecules.</title>
        <authorList>
            <person name="Bradbury L.E."/>
            <person name="Kansas G.S."/>
            <person name="Levy S."/>
            <person name="Evans R.L."/>
            <person name="Tedder T.F."/>
        </authorList>
    </citation>
    <scope>IDENTIFICATION IN A COMPLEX WITH CD19; CD81 AND IFITM1</scope>
    <scope>SUBCELLULAR LOCATION</scope>
    <scope>FUNCTION</scope>
</reference>
<reference key="17">
    <citation type="journal article" date="1992" name="Nature">
        <title>CD21 is a ligand for CD23 and regulates IgE production.</title>
        <authorList>
            <person name="Aubry J.P."/>
            <person name="Pochon S."/>
            <person name="Graber P."/>
            <person name="Jansen K.U."/>
            <person name="Bonnefoy J.Y."/>
        </authorList>
    </citation>
    <scope>FUNCTION</scope>
    <scope>INTERACTION WITH CD23</scope>
</reference>
<reference key="18">
    <citation type="journal article" date="1995" name="Mol. Immunol.">
        <title>Binding sites of the Epstein-Barr virus and C3d receptor (CR2, CD21) for its three intracellular ligands, the p53 anti-oncoprotein, the p68 calcium binding protein and the nuclear p120 ribonucleoprotein.</title>
        <authorList>
            <person name="Barel M."/>
            <person name="Balbo M."/>
            <person name="Gauffre A."/>
            <person name="Frade R."/>
        </authorList>
    </citation>
    <scope>FUNCTION AS A RECEPTOR FOR HNRNPU</scope>
</reference>
<reference key="19">
    <citation type="journal article" date="2003" name="Eur. J. Immunol.">
        <title>Activation of Epstein-Barr virus/C3d receptor (gp140, CR2, CD21) on human cell surface triggers pp60src and Akt-GSK3 activities upstream and downstream to PI 3-kinase, respectively.</title>
        <authorList>
            <person name="Barel M."/>
            <person name="Balbo M."/>
            <person name="Le Romancer M."/>
            <person name="Frade R."/>
        </authorList>
    </citation>
    <scope>FUNCTION</scope>
</reference>
<reference key="20">
    <citation type="journal article" date="2005" name="J. Exp. Med.">
        <title>The structure of human CD23 and its interactions with IgE and CD21.</title>
        <authorList>
            <person name="Hibbert R.G."/>
            <person name="Teriete P."/>
            <person name="Grundy G.J."/>
            <person name="Beavil R.L."/>
            <person name="Reljic R."/>
            <person name="Holers V.M."/>
            <person name="Hannan J.P."/>
            <person name="Sutton B.J."/>
            <person name="Gould H.J."/>
            <person name="McDonnell J.M."/>
        </authorList>
    </citation>
    <scope>INTERACTION WITH FCER2</scope>
</reference>
<reference key="21">
    <citation type="journal article" date="2009" name="Nat. Biotechnol.">
        <title>Mass-spectrometric identification and relative quantification of N-linked cell surface glycoproteins.</title>
        <authorList>
            <person name="Wollscheid B."/>
            <person name="Bausch-Fluck D."/>
            <person name="Henderson C."/>
            <person name="O'Brien R."/>
            <person name="Bibel M."/>
            <person name="Schiess R."/>
            <person name="Aebersold R."/>
            <person name="Watts J.D."/>
        </authorList>
    </citation>
    <scope>GLYCOSYLATION [LARGE SCALE ANALYSIS] AT ASN-623</scope>
    <source>
        <tissue>Leukemic T-cell</tissue>
    </source>
</reference>
<reference key="22">
    <citation type="journal article" date="2012" name="J. Allergy Clin. Immunol.">
        <title>Genetic CD21 deficiency is associated with hypogammaglobulinemia.</title>
        <authorList>
            <person name="Thiel J."/>
            <person name="Kimmig L."/>
            <person name="Salzer U."/>
            <person name="Grudzien M."/>
            <person name="Lebrecht D."/>
            <person name="Hagena T."/>
            <person name="Draeger R."/>
            <person name="Volxen N."/>
            <person name="Bergbreiter A."/>
            <person name="Jennings S."/>
            <person name="Gutenberger S."/>
            <person name="Aichem A."/>
            <person name="Illges H."/>
            <person name="Hannan J.P."/>
            <person name="Kienzler A.K."/>
            <person name="Rizzi M."/>
            <person name="Eibel H."/>
            <person name="Peter H.H."/>
            <person name="Warnatz K."/>
            <person name="Grimbacher B."/>
            <person name="Rump J.A."/>
            <person name="Schlesier M."/>
        </authorList>
    </citation>
    <scope>INVOLVEMENT IN CVID7</scope>
</reference>
<reference key="23">
    <citation type="journal article" date="2018" name="Int. Immunol.">
        <title>CD21 and FCRL5 form a receptor complex with robust B-cell activating capacity.</title>
        <authorList>
            <person name="Franco A."/>
            <person name="Kraus Z."/>
            <person name="Li H."/>
            <person name="Seibert N."/>
            <person name="Dement-Brown J."/>
            <person name="Tolnay M."/>
        </authorList>
    </citation>
    <scope>FUNCTION</scope>
    <scope>INTERACTION WITH FCRL5</scope>
</reference>
<reference key="24">
    <citation type="journal article" date="2001" name="Science">
        <title>Structure of complement receptor 2 in complex with its C3d ligand.</title>
        <authorList>
            <person name="Szakonyi G."/>
            <person name="Guthridge J.M."/>
            <person name="Li D."/>
            <person name="Young K."/>
            <person name="Holers V.M."/>
            <person name="Chen X.S."/>
        </authorList>
    </citation>
    <scope>X-RAY CRYSTALLOGRAPHY (2.04 ANGSTROMS) OF 21-153 IN COMPLEX WITH C3</scope>
    <scope>DISULFIDE BONDS</scope>
</reference>
<reference key="25">
    <citation type="journal article" date="2002" name="Proc. Natl. Acad. Sci. U.S.A.">
        <title>The crystal structure of human CD21: Implications for Epstein-Barr virus and C3d binding.</title>
        <authorList>
            <person name="Prota A.E."/>
            <person name="Sage D.R."/>
            <person name="Stehle T."/>
            <person name="Fingeroth J.D."/>
        </authorList>
    </citation>
    <scope>X-RAY CRYSTALLOGRAPHY (1.8 ANGSTROMS) OF 22-148</scope>
    <scope>DISULFIDE BONDS</scope>
    <scope>GLYCOSYLATION AT ASN-121 AND ASN-127</scope>
</reference>
<reference key="26">
    <citation type="journal article" date="2006" name="J. Mol. Biol.">
        <title>The 15 SCR flexible extracellular domains of human complement receptor type 2 can mediate multiple ligand and antigen interactions.</title>
        <authorList>
            <person name="Gilbert H.E."/>
            <person name="Asokan R."/>
            <person name="Holers V.M."/>
            <person name="Perkins S.J."/>
        </authorList>
    </citation>
    <scope>X-RAY SCATTERING SOLUTION STRUCTURE OF 21-971</scope>
</reference>
<reference key="27">
    <citation type="journal article" date="2011" name="Science">
        <title>A crystal structure of the complex between human complement receptor 2 and its ligand C3d.</title>
        <authorList>
            <person name="van den Elsen J.M."/>
            <person name="Isenman D.E."/>
        </authorList>
    </citation>
    <scope>X-RAY CRYSTALLOGRAPHY (3.16 ANGSTROMS) OF 996-1303 IN COMPLEX WITH C3</scope>
    <scope>INTERACTION WITH C3</scope>
    <scope>DISULFIDE BONDS</scope>
    <scope>MUTAGENESIS OF ARG-103; ASP-112 AND LYS-128</scope>
    <scope>FUNCTION</scope>
</reference>
<reference key="28">
    <citation type="journal article" date="2007" name="Proc. Natl. Acad. Sci. U.S.A.">
        <title>Association of a common complement receptor 2 haplotype with increased risk of systemic lupus erythematosus.</title>
        <authorList>
            <person name="Wu H."/>
            <person name="Boackle S.A."/>
            <person name="Hanvivadhanakul P."/>
            <person name="Ulgiati D."/>
            <person name="Grossman J.M."/>
            <person name="Lee Y."/>
            <person name="Shen N."/>
            <person name="Abraham L.J."/>
            <person name="Mercer T.R."/>
            <person name="Park E."/>
            <person name="Hebert L.A."/>
            <person name="Rovin B.H."/>
            <person name="Birmingham D.J."/>
            <person name="Chang D.-M."/>
            <person name="Chen C.J."/>
            <person name="McCurdy D."/>
            <person name="Badsha H.M."/>
            <person name="Thong B.Y.H."/>
            <person name="Chng H.H."/>
            <person name="Arnett F.C."/>
            <person name="Wallace D.J."/>
            <person name="Yu C.Y."/>
            <person name="Hahn B.H."/>
            <person name="Cantor R.M."/>
            <person name="Tsao B.P."/>
        </authorList>
    </citation>
    <scope>VARIANT ASN-639</scope>
    <scope>INVOLVEMENT IN SLEB9</scope>
</reference>